<name>RLMN_PROM1</name>
<sequence>MTKLPKLSSNSSLLGLSSEDLEEFARQEGEKSFRGRQIHEWIYQRGAKSLDSISVLPKKWRDSLVRKGIQIGRLDEINRVVAEDETLKLLMGTFDGEIVETVGIPTDKRLTVCVSSQIGCPMGCKFCATGKGGLNRSLDVNEIVDQVISVRETMNRRPTHVVFMGMGEPLLNIQNVLDSIECLTSDIGIGQRKITVSTVGIPNTLSDLAKLAQDRLGRVQFTLAVSLHAPNQTLRELIIPSASSYPINSLLKDCKKYIDLTGRRVSFEYILLGGLNDKDIHAEQLANLMRGFQSHVNLIAYNPIAEENFKRPSQSRVNAFRELLENRGVAVSVRASRGRDKDAACGQLRRQTIDKIKIN</sequence>
<evidence type="ECO:0000255" key="1">
    <source>
        <dbReference type="HAMAP-Rule" id="MF_01849"/>
    </source>
</evidence>
<evidence type="ECO:0000255" key="2">
    <source>
        <dbReference type="PROSITE-ProRule" id="PRU01266"/>
    </source>
</evidence>
<keyword id="KW-0004">4Fe-4S</keyword>
<keyword id="KW-0963">Cytoplasm</keyword>
<keyword id="KW-1015">Disulfide bond</keyword>
<keyword id="KW-0408">Iron</keyword>
<keyword id="KW-0411">Iron-sulfur</keyword>
<keyword id="KW-0479">Metal-binding</keyword>
<keyword id="KW-0489">Methyltransferase</keyword>
<keyword id="KW-0698">rRNA processing</keyword>
<keyword id="KW-0949">S-adenosyl-L-methionine</keyword>
<keyword id="KW-0808">Transferase</keyword>
<keyword id="KW-0819">tRNA processing</keyword>
<gene>
    <name evidence="1" type="primary">rlmN</name>
    <name type="ordered locus">NATL1_18821</name>
</gene>
<feature type="chain" id="PRO_0000350321" description="Probable dual-specificity RNA methyltransferase RlmN">
    <location>
        <begin position="1"/>
        <end position="359"/>
    </location>
</feature>
<feature type="domain" description="Radical SAM core" evidence="2">
    <location>
        <begin position="106"/>
        <end position="340"/>
    </location>
</feature>
<feature type="active site" description="Proton acceptor" evidence="1">
    <location>
        <position position="100"/>
    </location>
</feature>
<feature type="active site" description="S-methylcysteine intermediate" evidence="1">
    <location>
        <position position="345"/>
    </location>
</feature>
<feature type="binding site" evidence="1">
    <location>
        <position position="120"/>
    </location>
    <ligand>
        <name>[4Fe-4S] cluster</name>
        <dbReference type="ChEBI" id="CHEBI:49883"/>
        <note>4Fe-4S-S-AdoMet</note>
    </ligand>
</feature>
<feature type="binding site" evidence="1">
    <location>
        <position position="124"/>
    </location>
    <ligand>
        <name>[4Fe-4S] cluster</name>
        <dbReference type="ChEBI" id="CHEBI:49883"/>
        <note>4Fe-4S-S-AdoMet</note>
    </ligand>
</feature>
<feature type="binding site" evidence="1">
    <location>
        <position position="127"/>
    </location>
    <ligand>
        <name>[4Fe-4S] cluster</name>
        <dbReference type="ChEBI" id="CHEBI:49883"/>
        <note>4Fe-4S-S-AdoMet</note>
    </ligand>
</feature>
<feature type="binding site" evidence="1">
    <location>
        <begin position="167"/>
        <end position="168"/>
    </location>
    <ligand>
        <name>S-adenosyl-L-methionine</name>
        <dbReference type="ChEBI" id="CHEBI:59789"/>
    </ligand>
</feature>
<feature type="binding site" evidence="1">
    <location>
        <position position="197"/>
    </location>
    <ligand>
        <name>S-adenosyl-L-methionine</name>
        <dbReference type="ChEBI" id="CHEBI:59789"/>
    </ligand>
</feature>
<feature type="binding site" evidence="1">
    <location>
        <begin position="226"/>
        <end position="228"/>
    </location>
    <ligand>
        <name>S-adenosyl-L-methionine</name>
        <dbReference type="ChEBI" id="CHEBI:59789"/>
    </ligand>
</feature>
<feature type="binding site" evidence="1">
    <location>
        <position position="302"/>
    </location>
    <ligand>
        <name>S-adenosyl-L-methionine</name>
        <dbReference type="ChEBI" id="CHEBI:59789"/>
    </ligand>
</feature>
<feature type="disulfide bond" description="(transient)" evidence="1">
    <location>
        <begin position="113"/>
        <end position="345"/>
    </location>
</feature>
<proteinExistence type="inferred from homology"/>
<dbReference type="EC" id="2.1.1.192" evidence="1"/>
<dbReference type="EMBL" id="CP000553">
    <property type="protein sequence ID" value="ABM76438.1"/>
    <property type="molecule type" value="Genomic_DNA"/>
</dbReference>
<dbReference type="RefSeq" id="WP_011824418.1">
    <property type="nucleotide sequence ID" value="NC_008819.1"/>
</dbReference>
<dbReference type="SMR" id="A2C4M8"/>
<dbReference type="KEGG" id="pme:NATL1_18821"/>
<dbReference type="eggNOG" id="COG0820">
    <property type="taxonomic scope" value="Bacteria"/>
</dbReference>
<dbReference type="HOGENOM" id="CLU_029101_1_1_3"/>
<dbReference type="Proteomes" id="UP000002592">
    <property type="component" value="Chromosome"/>
</dbReference>
<dbReference type="GO" id="GO:0005737">
    <property type="term" value="C:cytoplasm"/>
    <property type="evidence" value="ECO:0007669"/>
    <property type="project" value="UniProtKB-SubCell"/>
</dbReference>
<dbReference type="GO" id="GO:0051539">
    <property type="term" value="F:4 iron, 4 sulfur cluster binding"/>
    <property type="evidence" value="ECO:0007669"/>
    <property type="project" value="UniProtKB-UniRule"/>
</dbReference>
<dbReference type="GO" id="GO:0046872">
    <property type="term" value="F:metal ion binding"/>
    <property type="evidence" value="ECO:0007669"/>
    <property type="project" value="UniProtKB-KW"/>
</dbReference>
<dbReference type="GO" id="GO:0070040">
    <property type="term" value="F:rRNA (adenine(2503)-C2-)-methyltransferase activity"/>
    <property type="evidence" value="ECO:0007669"/>
    <property type="project" value="UniProtKB-UniRule"/>
</dbReference>
<dbReference type="GO" id="GO:0019843">
    <property type="term" value="F:rRNA binding"/>
    <property type="evidence" value="ECO:0007669"/>
    <property type="project" value="UniProtKB-UniRule"/>
</dbReference>
<dbReference type="GO" id="GO:0002935">
    <property type="term" value="F:tRNA (adenine(37)-C2)-methyltransferase activity"/>
    <property type="evidence" value="ECO:0007669"/>
    <property type="project" value="UniProtKB-UniRule"/>
</dbReference>
<dbReference type="GO" id="GO:0000049">
    <property type="term" value="F:tRNA binding"/>
    <property type="evidence" value="ECO:0007669"/>
    <property type="project" value="UniProtKB-UniRule"/>
</dbReference>
<dbReference type="GO" id="GO:0070475">
    <property type="term" value="P:rRNA base methylation"/>
    <property type="evidence" value="ECO:0007669"/>
    <property type="project" value="UniProtKB-UniRule"/>
</dbReference>
<dbReference type="GO" id="GO:0030488">
    <property type="term" value="P:tRNA methylation"/>
    <property type="evidence" value="ECO:0007669"/>
    <property type="project" value="UniProtKB-UniRule"/>
</dbReference>
<dbReference type="CDD" id="cd01335">
    <property type="entry name" value="Radical_SAM"/>
    <property type="match status" value="1"/>
</dbReference>
<dbReference type="FunFam" id="3.20.20.70:FF:000014">
    <property type="entry name" value="Probable dual-specificity RNA methyltransferase RlmN"/>
    <property type="match status" value="1"/>
</dbReference>
<dbReference type="Gene3D" id="1.10.150.530">
    <property type="match status" value="1"/>
</dbReference>
<dbReference type="Gene3D" id="3.20.20.70">
    <property type="entry name" value="Aldolase class I"/>
    <property type="match status" value="1"/>
</dbReference>
<dbReference type="HAMAP" id="MF_01849">
    <property type="entry name" value="RNA_methyltr_RlmN"/>
    <property type="match status" value="1"/>
</dbReference>
<dbReference type="InterPro" id="IPR013785">
    <property type="entry name" value="Aldolase_TIM"/>
</dbReference>
<dbReference type="InterPro" id="IPR040072">
    <property type="entry name" value="Methyltransferase_A"/>
</dbReference>
<dbReference type="InterPro" id="IPR048641">
    <property type="entry name" value="RlmN_N"/>
</dbReference>
<dbReference type="InterPro" id="IPR027492">
    <property type="entry name" value="RNA_MTrfase_RlmN"/>
</dbReference>
<dbReference type="InterPro" id="IPR004383">
    <property type="entry name" value="rRNA_lsu_MTrfase_RlmN/Cfr"/>
</dbReference>
<dbReference type="InterPro" id="IPR007197">
    <property type="entry name" value="rSAM"/>
</dbReference>
<dbReference type="NCBIfam" id="TIGR00048">
    <property type="entry name" value="rRNA_mod_RlmN"/>
    <property type="match status" value="1"/>
</dbReference>
<dbReference type="PANTHER" id="PTHR30544">
    <property type="entry name" value="23S RRNA METHYLTRANSFERASE"/>
    <property type="match status" value="1"/>
</dbReference>
<dbReference type="PANTHER" id="PTHR30544:SF5">
    <property type="entry name" value="RADICAL SAM CORE DOMAIN-CONTAINING PROTEIN"/>
    <property type="match status" value="1"/>
</dbReference>
<dbReference type="Pfam" id="PF04055">
    <property type="entry name" value="Radical_SAM"/>
    <property type="match status" value="1"/>
</dbReference>
<dbReference type="Pfam" id="PF21016">
    <property type="entry name" value="RlmN_N"/>
    <property type="match status" value="1"/>
</dbReference>
<dbReference type="PIRSF" id="PIRSF006004">
    <property type="entry name" value="CHP00048"/>
    <property type="match status" value="1"/>
</dbReference>
<dbReference type="SFLD" id="SFLDF00275">
    <property type="entry name" value="adenosine_C2_methyltransferase"/>
    <property type="match status" value="1"/>
</dbReference>
<dbReference type="SFLD" id="SFLDG01062">
    <property type="entry name" value="methyltransferase_(Class_A)"/>
    <property type="match status" value="1"/>
</dbReference>
<dbReference type="SUPFAM" id="SSF102114">
    <property type="entry name" value="Radical SAM enzymes"/>
    <property type="match status" value="1"/>
</dbReference>
<dbReference type="PROSITE" id="PS51918">
    <property type="entry name" value="RADICAL_SAM"/>
    <property type="match status" value="1"/>
</dbReference>
<reference key="1">
    <citation type="journal article" date="2007" name="PLoS Genet.">
        <title>Patterns and implications of gene gain and loss in the evolution of Prochlorococcus.</title>
        <authorList>
            <person name="Kettler G.C."/>
            <person name="Martiny A.C."/>
            <person name="Huang K."/>
            <person name="Zucker J."/>
            <person name="Coleman M.L."/>
            <person name="Rodrigue S."/>
            <person name="Chen F."/>
            <person name="Lapidus A."/>
            <person name="Ferriera S."/>
            <person name="Johnson J."/>
            <person name="Steglich C."/>
            <person name="Church G.M."/>
            <person name="Richardson P."/>
            <person name="Chisholm S.W."/>
        </authorList>
    </citation>
    <scope>NUCLEOTIDE SEQUENCE [LARGE SCALE GENOMIC DNA]</scope>
    <source>
        <strain>NATL1A</strain>
    </source>
</reference>
<comment type="function">
    <text evidence="1">Specifically methylates position 2 of adenine 2503 in 23S rRNA and position 2 of adenine 37 in tRNAs.</text>
</comment>
<comment type="catalytic activity">
    <reaction evidence="1">
        <text>adenosine(2503) in 23S rRNA + 2 reduced [2Fe-2S]-[ferredoxin] + 2 S-adenosyl-L-methionine = 2-methyladenosine(2503) in 23S rRNA + 5'-deoxyadenosine + L-methionine + 2 oxidized [2Fe-2S]-[ferredoxin] + S-adenosyl-L-homocysteine</text>
        <dbReference type="Rhea" id="RHEA:42916"/>
        <dbReference type="Rhea" id="RHEA-COMP:10000"/>
        <dbReference type="Rhea" id="RHEA-COMP:10001"/>
        <dbReference type="Rhea" id="RHEA-COMP:10152"/>
        <dbReference type="Rhea" id="RHEA-COMP:10282"/>
        <dbReference type="ChEBI" id="CHEBI:17319"/>
        <dbReference type="ChEBI" id="CHEBI:33737"/>
        <dbReference type="ChEBI" id="CHEBI:33738"/>
        <dbReference type="ChEBI" id="CHEBI:57844"/>
        <dbReference type="ChEBI" id="CHEBI:57856"/>
        <dbReference type="ChEBI" id="CHEBI:59789"/>
        <dbReference type="ChEBI" id="CHEBI:74411"/>
        <dbReference type="ChEBI" id="CHEBI:74497"/>
        <dbReference type="EC" id="2.1.1.192"/>
    </reaction>
</comment>
<comment type="catalytic activity">
    <reaction evidence="1">
        <text>adenosine(37) in tRNA + 2 reduced [2Fe-2S]-[ferredoxin] + 2 S-adenosyl-L-methionine = 2-methyladenosine(37) in tRNA + 5'-deoxyadenosine + L-methionine + 2 oxidized [2Fe-2S]-[ferredoxin] + S-adenosyl-L-homocysteine</text>
        <dbReference type="Rhea" id="RHEA:43332"/>
        <dbReference type="Rhea" id="RHEA-COMP:10000"/>
        <dbReference type="Rhea" id="RHEA-COMP:10001"/>
        <dbReference type="Rhea" id="RHEA-COMP:10162"/>
        <dbReference type="Rhea" id="RHEA-COMP:10485"/>
        <dbReference type="ChEBI" id="CHEBI:17319"/>
        <dbReference type="ChEBI" id="CHEBI:33737"/>
        <dbReference type="ChEBI" id="CHEBI:33738"/>
        <dbReference type="ChEBI" id="CHEBI:57844"/>
        <dbReference type="ChEBI" id="CHEBI:57856"/>
        <dbReference type="ChEBI" id="CHEBI:59789"/>
        <dbReference type="ChEBI" id="CHEBI:74411"/>
        <dbReference type="ChEBI" id="CHEBI:74497"/>
        <dbReference type="EC" id="2.1.1.192"/>
    </reaction>
</comment>
<comment type="cofactor">
    <cofactor evidence="1">
        <name>[4Fe-4S] cluster</name>
        <dbReference type="ChEBI" id="CHEBI:49883"/>
    </cofactor>
    <text evidence="1">Binds 1 [4Fe-4S] cluster. The cluster is coordinated with 3 cysteines and an exchangeable S-adenosyl-L-methionine.</text>
</comment>
<comment type="subcellular location">
    <subcellularLocation>
        <location evidence="1">Cytoplasm</location>
    </subcellularLocation>
</comment>
<comment type="miscellaneous">
    <text evidence="1">Reaction proceeds by a ping-pong mechanism involving intermediate methylation of a conserved cysteine residue.</text>
</comment>
<comment type="similarity">
    <text evidence="1">Belongs to the radical SAM superfamily. RlmN family.</text>
</comment>
<protein>
    <recommendedName>
        <fullName evidence="1">Probable dual-specificity RNA methyltransferase RlmN</fullName>
        <ecNumber evidence="1">2.1.1.192</ecNumber>
    </recommendedName>
    <alternativeName>
        <fullName evidence="1">23S rRNA (adenine(2503)-C(2))-methyltransferase</fullName>
    </alternativeName>
    <alternativeName>
        <fullName evidence="1">23S rRNA m2A2503 methyltransferase</fullName>
    </alternativeName>
    <alternativeName>
        <fullName evidence="1">Ribosomal RNA large subunit methyltransferase N</fullName>
    </alternativeName>
    <alternativeName>
        <fullName evidence="1">tRNA (adenine(37)-C(2))-methyltransferase</fullName>
    </alternativeName>
    <alternativeName>
        <fullName evidence="1">tRNA m2A37 methyltransferase</fullName>
    </alternativeName>
</protein>
<organism>
    <name type="scientific">Prochlorococcus marinus (strain NATL1A)</name>
    <dbReference type="NCBI Taxonomy" id="167555"/>
    <lineage>
        <taxon>Bacteria</taxon>
        <taxon>Bacillati</taxon>
        <taxon>Cyanobacteriota</taxon>
        <taxon>Cyanophyceae</taxon>
        <taxon>Synechococcales</taxon>
        <taxon>Prochlorococcaceae</taxon>
        <taxon>Prochlorococcus</taxon>
    </lineage>
</organism>
<accession>A2C4M8</accession>